<evidence type="ECO:0000255" key="1"/>
<evidence type="ECO:0000269" key="2">
    <source>
    </source>
</evidence>
<evidence type="ECO:0000305" key="3"/>
<evidence type="ECO:0000312" key="4">
    <source>
        <dbReference type="FlyBase" id="FBgn0037239"/>
    </source>
</evidence>
<accession>Q9VN13</accession>
<keyword id="KW-0029">Amino-acid transport</keyword>
<keyword id="KW-0472">Membrane</keyword>
<keyword id="KW-0496">Mitochondrion</keyword>
<keyword id="KW-1185">Reference proteome</keyword>
<keyword id="KW-0812">Transmembrane</keyword>
<keyword id="KW-1133">Transmembrane helix</keyword>
<keyword id="KW-0813">Transport</keyword>
<comment type="function">
    <text evidence="2">Mitochondrial amino-acid transporter that mediates transport of serine into mitochondria.</text>
</comment>
<comment type="subcellular location">
    <subcellularLocation>
        <location evidence="2">Mitochondrion membrane</location>
        <topology evidence="1">Multi-pass membrane protein</topology>
    </subcellularLocation>
</comment>
<comment type="similarity">
    <text evidence="3">Belongs to the sideroflexin family.</text>
</comment>
<reference key="1">
    <citation type="journal article" date="2000" name="Science">
        <title>The genome sequence of Drosophila melanogaster.</title>
        <authorList>
            <person name="Adams M.D."/>
            <person name="Celniker S.E."/>
            <person name="Holt R.A."/>
            <person name="Evans C.A."/>
            <person name="Gocayne J.D."/>
            <person name="Amanatides P.G."/>
            <person name="Scherer S.E."/>
            <person name="Li P.W."/>
            <person name="Hoskins R.A."/>
            <person name="Galle R.F."/>
            <person name="George R.A."/>
            <person name="Lewis S.E."/>
            <person name="Richards S."/>
            <person name="Ashburner M."/>
            <person name="Henderson S.N."/>
            <person name="Sutton G.G."/>
            <person name="Wortman J.R."/>
            <person name="Yandell M.D."/>
            <person name="Zhang Q."/>
            <person name="Chen L.X."/>
            <person name="Brandon R.C."/>
            <person name="Rogers Y.-H.C."/>
            <person name="Blazej R.G."/>
            <person name="Champe M."/>
            <person name="Pfeiffer B.D."/>
            <person name="Wan K.H."/>
            <person name="Doyle C."/>
            <person name="Baxter E.G."/>
            <person name="Helt G."/>
            <person name="Nelson C.R."/>
            <person name="Miklos G.L.G."/>
            <person name="Abril J.F."/>
            <person name="Agbayani A."/>
            <person name="An H.-J."/>
            <person name="Andrews-Pfannkoch C."/>
            <person name="Baldwin D."/>
            <person name="Ballew R.M."/>
            <person name="Basu A."/>
            <person name="Baxendale J."/>
            <person name="Bayraktaroglu L."/>
            <person name="Beasley E.M."/>
            <person name="Beeson K.Y."/>
            <person name="Benos P.V."/>
            <person name="Berman B.P."/>
            <person name="Bhandari D."/>
            <person name="Bolshakov S."/>
            <person name="Borkova D."/>
            <person name="Botchan M.R."/>
            <person name="Bouck J."/>
            <person name="Brokstein P."/>
            <person name="Brottier P."/>
            <person name="Burtis K.C."/>
            <person name="Busam D.A."/>
            <person name="Butler H."/>
            <person name="Cadieu E."/>
            <person name="Center A."/>
            <person name="Chandra I."/>
            <person name="Cherry J.M."/>
            <person name="Cawley S."/>
            <person name="Dahlke C."/>
            <person name="Davenport L.B."/>
            <person name="Davies P."/>
            <person name="de Pablos B."/>
            <person name="Delcher A."/>
            <person name="Deng Z."/>
            <person name="Mays A.D."/>
            <person name="Dew I."/>
            <person name="Dietz S.M."/>
            <person name="Dodson K."/>
            <person name="Doup L.E."/>
            <person name="Downes M."/>
            <person name="Dugan-Rocha S."/>
            <person name="Dunkov B.C."/>
            <person name="Dunn P."/>
            <person name="Durbin K.J."/>
            <person name="Evangelista C.C."/>
            <person name="Ferraz C."/>
            <person name="Ferriera S."/>
            <person name="Fleischmann W."/>
            <person name="Fosler C."/>
            <person name="Gabrielian A.E."/>
            <person name="Garg N.S."/>
            <person name="Gelbart W.M."/>
            <person name="Glasser K."/>
            <person name="Glodek A."/>
            <person name="Gong F."/>
            <person name="Gorrell J.H."/>
            <person name="Gu Z."/>
            <person name="Guan P."/>
            <person name="Harris M."/>
            <person name="Harris N.L."/>
            <person name="Harvey D.A."/>
            <person name="Heiman T.J."/>
            <person name="Hernandez J.R."/>
            <person name="Houck J."/>
            <person name="Hostin D."/>
            <person name="Houston K.A."/>
            <person name="Howland T.J."/>
            <person name="Wei M.-H."/>
            <person name="Ibegwam C."/>
            <person name="Jalali M."/>
            <person name="Kalush F."/>
            <person name="Karpen G.H."/>
            <person name="Ke Z."/>
            <person name="Kennison J.A."/>
            <person name="Ketchum K.A."/>
            <person name="Kimmel B.E."/>
            <person name="Kodira C.D."/>
            <person name="Kraft C.L."/>
            <person name="Kravitz S."/>
            <person name="Kulp D."/>
            <person name="Lai Z."/>
            <person name="Lasko P."/>
            <person name="Lei Y."/>
            <person name="Levitsky A.A."/>
            <person name="Li J.H."/>
            <person name="Li Z."/>
            <person name="Liang Y."/>
            <person name="Lin X."/>
            <person name="Liu X."/>
            <person name="Mattei B."/>
            <person name="McIntosh T.C."/>
            <person name="McLeod M.P."/>
            <person name="McPherson D."/>
            <person name="Merkulov G."/>
            <person name="Milshina N.V."/>
            <person name="Mobarry C."/>
            <person name="Morris J."/>
            <person name="Moshrefi A."/>
            <person name="Mount S.M."/>
            <person name="Moy M."/>
            <person name="Murphy B."/>
            <person name="Murphy L."/>
            <person name="Muzny D.M."/>
            <person name="Nelson D.L."/>
            <person name="Nelson D.R."/>
            <person name="Nelson K.A."/>
            <person name="Nixon K."/>
            <person name="Nusskern D.R."/>
            <person name="Pacleb J.M."/>
            <person name="Palazzolo M."/>
            <person name="Pittman G.S."/>
            <person name="Pan S."/>
            <person name="Pollard J."/>
            <person name="Puri V."/>
            <person name="Reese M.G."/>
            <person name="Reinert K."/>
            <person name="Remington K."/>
            <person name="Saunders R.D.C."/>
            <person name="Scheeler F."/>
            <person name="Shen H."/>
            <person name="Shue B.C."/>
            <person name="Siden-Kiamos I."/>
            <person name="Simpson M."/>
            <person name="Skupski M.P."/>
            <person name="Smith T.J."/>
            <person name="Spier E."/>
            <person name="Spradling A.C."/>
            <person name="Stapleton M."/>
            <person name="Strong R."/>
            <person name="Sun E."/>
            <person name="Svirskas R."/>
            <person name="Tector C."/>
            <person name="Turner R."/>
            <person name="Venter E."/>
            <person name="Wang A.H."/>
            <person name="Wang X."/>
            <person name="Wang Z.-Y."/>
            <person name="Wassarman D.A."/>
            <person name="Weinstock G.M."/>
            <person name="Weissenbach J."/>
            <person name="Williams S.M."/>
            <person name="Woodage T."/>
            <person name="Worley K.C."/>
            <person name="Wu D."/>
            <person name="Yang S."/>
            <person name="Yao Q.A."/>
            <person name="Ye J."/>
            <person name="Yeh R.-F."/>
            <person name="Zaveri J.S."/>
            <person name="Zhan M."/>
            <person name="Zhang G."/>
            <person name="Zhao Q."/>
            <person name="Zheng L."/>
            <person name="Zheng X.H."/>
            <person name="Zhong F.N."/>
            <person name="Zhong W."/>
            <person name="Zhou X."/>
            <person name="Zhu S.C."/>
            <person name="Zhu X."/>
            <person name="Smith H.O."/>
            <person name="Gibbs R.A."/>
            <person name="Myers E.W."/>
            <person name="Rubin G.M."/>
            <person name="Venter J.C."/>
        </authorList>
    </citation>
    <scope>NUCLEOTIDE SEQUENCE [LARGE SCALE GENOMIC DNA]</scope>
    <source>
        <strain>Berkeley</strain>
    </source>
</reference>
<reference key="2">
    <citation type="journal article" date="2002" name="Genome Biol.">
        <title>Annotation of the Drosophila melanogaster euchromatic genome: a systematic review.</title>
        <authorList>
            <person name="Misra S."/>
            <person name="Crosby M.A."/>
            <person name="Mungall C.J."/>
            <person name="Matthews B.B."/>
            <person name="Campbell K.S."/>
            <person name="Hradecky P."/>
            <person name="Huang Y."/>
            <person name="Kaminker J.S."/>
            <person name="Millburn G.H."/>
            <person name="Prochnik S.E."/>
            <person name="Smith C.D."/>
            <person name="Tupy J.L."/>
            <person name="Whitfield E.J."/>
            <person name="Bayraktaroglu L."/>
            <person name="Berman B.P."/>
            <person name="Bettencourt B.R."/>
            <person name="Celniker S.E."/>
            <person name="de Grey A.D.N.J."/>
            <person name="Drysdale R.A."/>
            <person name="Harris N.L."/>
            <person name="Richter J."/>
            <person name="Russo S."/>
            <person name="Schroeder A.J."/>
            <person name="Shu S.Q."/>
            <person name="Stapleton M."/>
            <person name="Yamada C."/>
            <person name="Ashburner M."/>
            <person name="Gelbart W.M."/>
            <person name="Rubin G.M."/>
            <person name="Lewis S.E."/>
        </authorList>
    </citation>
    <scope>GENOME REANNOTATION</scope>
    <source>
        <strain>Berkeley</strain>
    </source>
</reference>
<reference key="3">
    <citation type="journal article" date="2002" name="Genome Biol.">
        <title>A Drosophila full-length cDNA resource.</title>
        <authorList>
            <person name="Stapleton M."/>
            <person name="Carlson J.W."/>
            <person name="Brokstein P."/>
            <person name="Yu C."/>
            <person name="Champe M."/>
            <person name="George R.A."/>
            <person name="Guarin H."/>
            <person name="Kronmiller B."/>
            <person name="Pacleb J.M."/>
            <person name="Park S."/>
            <person name="Wan K.H."/>
            <person name="Rubin G.M."/>
            <person name="Celniker S.E."/>
        </authorList>
    </citation>
    <scope>NUCLEOTIDE SEQUENCE [LARGE SCALE MRNA]</scope>
    <source>
        <strain>Berkeley</strain>
        <tissue>Testis</tissue>
    </source>
</reference>
<reference key="4">
    <citation type="submission" date="2002-11" db="EMBL/GenBank/DDBJ databases">
        <authorList>
            <person name="Stapleton M."/>
            <person name="Brokstein P."/>
            <person name="Hong L."/>
            <person name="Agbayani A."/>
            <person name="Carlson J."/>
            <person name="Champe M."/>
            <person name="Chavez C."/>
            <person name="Dorsett V."/>
            <person name="Dresnek D."/>
            <person name="Farfan D."/>
            <person name="Frise E."/>
            <person name="George R."/>
            <person name="Gonzalez M."/>
            <person name="Guarin H."/>
            <person name="Kronmiller B."/>
            <person name="Li P."/>
            <person name="Liao G."/>
            <person name="Miranda A."/>
            <person name="Mungall C.J."/>
            <person name="Nunoo J."/>
            <person name="Pacleb J."/>
            <person name="Paragas V."/>
            <person name="Park S."/>
            <person name="Patel S."/>
            <person name="Phouanenavong S."/>
            <person name="Wan K."/>
            <person name="Yu C."/>
            <person name="Lewis S.E."/>
            <person name="Rubin G.M."/>
            <person name="Celniker S."/>
        </authorList>
    </citation>
    <scope>NUCLEOTIDE SEQUENCE [LARGE SCALE MRNA]</scope>
    <source>
        <strain>Berkeley</strain>
        <tissue>Head</tissue>
    </source>
</reference>
<reference key="5">
    <citation type="journal article" date="2018" name="Science">
        <title>SFXN1 is a mitochondrial serine transporter required for one-carbon metabolism.</title>
        <authorList>
            <person name="Kory N."/>
            <person name="Wyant G.A."/>
            <person name="Prakash G."/>
            <person name="Uit de Bos J."/>
            <person name="Bottanelli F."/>
            <person name="Pacold M.E."/>
            <person name="Chan S.H."/>
            <person name="Lewis C.A."/>
            <person name="Wang T."/>
            <person name="Keys H.R."/>
            <person name="Guo Y.E."/>
            <person name="Sabatini D.M."/>
        </authorList>
    </citation>
    <scope>FUNCTION</scope>
    <scope>SUBCELLULAR LOCATION</scope>
</reference>
<name>SFXN1_DROME</name>
<proteinExistence type="evidence at transcript level"/>
<dbReference type="EMBL" id="AE014297">
    <property type="protein sequence ID" value="AAF52138.3"/>
    <property type="molecule type" value="Genomic_DNA"/>
</dbReference>
<dbReference type="EMBL" id="AE014297">
    <property type="protein sequence ID" value="AAN13307.2"/>
    <property type="molecule type" value="Genomic_DNA"/>
</dbReference>
<dbReference type="EMBL" id="AE014297">
    <property type="protein sequence ID" value="AAN13308.2"/>
    <property type="molecule type" value="Genomic_DNA"/>
</dbReference>
<dbReference type="EMBL" id="AE014297">
    <property type="protein sequence ID" value="AAN13309.2"/>
    <property type="molecule type" value="Genomic_DNA"/>
</dbReference>
<dbReference type="EMBL" id="AY089419">
    <property type="protein sequence ID" value="AAL90157.1"/>
    <property type="molecule type" value="mRNA"/>
</dbReference>
<dbReference type="EMBL" id="BT001832">
    <property type="protein sequence ID" value="AAN71587.1"/>
    <property type="molecule type" value="mRNA"/>
</dbReference>
<dbReference type="RefSeq" id="NP_649460.3">
    <property type="nucleotide sequence ID" value="NM_141203.4"/>
</dbReference>
<dbReference type="RefSeq" id="NP_730821.2">
    <property type="nucleotide sequence ID" value="NM_164345.3"/>
</dbReference>
<dbReference type="RefSeq" id="NP_730822.2">
    <property type="nucleotide sequence ID" value="NM_164346.3"/>
</dbReference>
<dbReference type="RefSeq" id="NP_730823.2">
    <property type="nucleotide sequence ID" value="NM_164347.3"/>
</dbReference>
<dbReference type="FunCoup" id="Q9VN13">
    <property type="interactions" value="960"/>
</dbReference>
<dbReference type="IntAct" id="Q9VN13">
    <property type="interactions" value="2"/>
</dbReference>
<dbReference type="STRING" id="7227.FBpp0078554"/>
<dbReference type="PaxDb" id="7227-FBpp0078553"/>
<dbReference type="DNASU" id="40552"/>
<dbReference type="EnsemblMetazoa" id="FBtr0078913">
    <property type="protein sequence ID" value="FBpp0078553"/>
    <property type="gene ID" value="FBgn0037239"/>
</dbReference>
<dbReference type="EnsemblMetazoa" id="FBtr0078914">
    <property type="protein sequence ID" value="FBpp0078554"/>
    <property type="gene ID" value="FBgn0037239"/>
</dbReference>
<dbReference type="EnsemblMetazoa" id="FBtr0078915">
    <property type="protein sequence ID" value="FBpp0078555"/>
    <property type="gene ID" value="FBgn0037239"/>
</dbReference>
<dbReference type="EnsemblMetazoa" id="FBtr0078916">
    <property type="protein sequence ID" value="FBpp0078556"/>
    <property type="gene ID" value="FBgn0037239"/>
</dbReference>
<dbReference type="GeneID" id="40552"/>
<dbReference type="KEGG" id="dme:Dmel_CG11739"/>
<dbReference type="UCSC" id="CG11739-RA">
    <property type="organism name" value="d. melanogaster"/>
</dbReference>
<dbReference type="AGR" id="FB:FBgn0037239"/>
<dbReference type="CTD" id="40552"/>
<dbReference type="FlyBase" id="FBgn0037239">
    <property type="gene designation" value="Sfxn1-3"/>
</dbReference>
<dbReference type="VEuPathDB" id="VectorBase:FBgn0037239"/>
<dbReference type="eggNOG" id="KOG3767">
    <property type="taxonomic scope" value="Eukaryota"/>
</dbReference>
<dbReference type="GeneTree" id="ENSGT01030000234641"/>
<dbReference type="HOGENOM" id="CLU_039425_1_0_1"/>
<dbReference type="InParanoid" id="Q9VN13"/>
<dbReference type="OMA" id="GRVRHCA"/>
<dbReference type="OrthoDB" id="6608471at2759"/>
<dbReference type="PhylomeDB" id="Q9VN13"/>
<dbReference type="BioGRID-ORCS" id="40552">
    <property type="hits" value="0 hits in 3 CRISPR screens"/>
</dbReference>
<dbReference type="ChiTaRS" id="Sfxn1-3">
    <property type="organism name" value="fly"/>
</dbReference>
<dbReference type="GenomeRNAi" id="40552"/>
<dbReference type="PRO" id="PR:Q9VN13"/>
<dbReference type="Proteomes" id="UP000000803">
    <property type="component" value="Chromosome 3R"/>
</dbReference>
<dbReference type="Bgee" id="FBgn0037239">
    <property type="expression patterns" value="Expressed in embryonic/larval hemocyte (Drosophila) and 181 other cell types or tissues"/>
</dbReference>
<dbReference type="GO" id="GO:0005743">
    <property type="term" value="C:mitochondrial inner membrane"/>
    <property type="evidence" value="ECO:0000250"/>
    <property type="project" value="FlyBase"/>
</dbReference>
<dbReference type="GO" id="GO:0005739">
    <property type="term" value="C:mitochondrion"/>
    <property type="evidence" value="ECO:0000314"/>
    <property type="project" value="UniProtKB"/>
</dbReference>
<dbReference type="GO" id="GO:0015194">
    <property type="term" value="F:L-serine transmembrane transporter activity"/>
    <property type="evidence" value="ECO:0000314"/>
    <property type="project" value="UniProtKB"/>
</dbReference>
<dbReference type="GO" id="GO:0015075">
    <property type="term" value="F:monoatomic ion transmembrane transporter activity"/>
    <property type="evidence" value="ECO:0007669"/>
    <property type="project" value="InterPro"/>
</dbReference>
<dbReference type="GO" id="GO:0022857">
    <property type="term" value="F:transmembrane transporter activity"/>
    <property type="evidence" value="ECO:0000318"/>
    <property type="project" value="GO_Central"/>
</dbReference>
<dbReference type="GO" id="GO:1990542">
    <property type="term" value="P:mitochondrial transmembrane transport"/>
    <property type="evidence" value="ECO:0000314"/>
    <property type="project" value="UniProtKB"/>
</dbReference>
<dbReference type="GO" id="GO:0006730">
    <property type="term" value="P:one-carbon metabolic process"/>
    <property type="evidence" value="ECO:0000314"/>
    <property type="project" value="UniProtKB"/>
</dbReference>
<dbReference type="GO" id="GO:0140300">
    <property type="term" value="P:serine import into mitochondrion"/>
    <property type="evidence" value="ECO:0000314"/>
    <property type="project" value="UniProtKB"/>
</dbReference>
<dbReference type="InterPro" id="IPR004686">
    <property type="entry name" value="Mtc"/>
</dbReference>
<dbReference type="NCBIfam" id="TIGR00798">
    <property type="entry name" value="mtc"/>
    <property type="match status" value="1"/>
</dbReference>
<dbReference type="PANTHER" id="PTHR11153">
    <property type="entry name" value="SIDEROFLEXIN"/>
    <property type="match status" value="1"/>
</dbReference>
<dbReference type="PANTHER" id="PTHR11153:SF8">
    <property type="entry name" value="SIDEROFLEXIN-1"/>
    <property type="match status" value="1"/>
</dbReference>
<dbReference type="Pfam" id="PF03820">
    <property type="entry name" value="SFXNs"/>
    <property type="match status" value="1"/>
</dbReference>
<gene>
    <name evidence="4" type="primary">Sfxn1-3</name>
    <name evidence="4" type="ORF">CG11739</name>
</gene>
<protein>
    <recommendedName>
        <fullName evidence="3">Sideroflexin-1-3</fullName>
    </recommendedName>
</protein>
<organism>
    <name type="scientific">Drosophila melanogaster</name>
    <name type="common">Fruit fly</name>
    <dbReference type="NCBI Taxonomy" id="7227"/>
    <lineage>
        <taxon>Eukaryota</taxon>
        <taxon>Metazoa</taxon>
        <taxon>Ecdysozoa</taxon>
        <taxon>Arthropoda</taxon>
        <taxon>Hexapoda</taxon>
        <taxon>Insecta</taxon>
        <taxon>Pterygota</taxon>
        <taxon>Neoptera</taxon>
        <taxon>Endopterygota</taxon>
        <taxon>Diptera</taxon>
        <taxon>Brachycera</taxon>
        <taxon>Muscomorpha</taxon>
        <taxon>Ephydroidea</taxon>
        <taxon>Drosophilidae</taxon>
        <taxon>Drosophila</taxon>
        <taxon>Sophophora</taxon>
    </lineage>
</organism>
<feature type="chain" id="PRO_0000446381" description="Sideroflexin-1-3">
    <location>
        <begin position="1"/>
        <end position="321"/>
    </location>
</feature>
<feature type="transmembrane region" description="Helical" evidence="1">
    <location>
        <begin position="101"/>
        <end position="121"/>
    </location>
</feature>
<feature type="transmembrane region" description="Helical" evidence="1">
    <location>
        <begin position="146"/>
        <end position="168"/>
    </location>
</feature>
<feature type="transmembrane region" description="Helical" evidence="1">
    <location>
        <begin position="174"/>
        <end position="194"/>
    </location>
</feature>
<feature type="transmembrane region" description="Helical" evidence="1">
    <location>
        <begin position="220"/>
        <end position="240"/>
    </location>
</feature>
<feature type="transmembrane region" description="Helical" evidence="1">
    <location>
        <begin position="266"/>
        <end position="286"/>
    </location>
</feature>
<sequence length="321" mass="35744">MSPLPRVNIDEPKYDQNSYLGRAKHFFLLTNPLNVLASASKLEEARQIVIKYRAGKDVPECKTIDDVWRAKYLYDSAFHPETGEKQIVIGRMAAQMPMNTIITGGMMAFYKSTPAVVFWQWFNQTFNAIVNYTNRSGTSPISQQQLVTSYCLATSGALVTALSLNHAVKNMNPLLGRLVPLVAVGAANCINIPCMRMQELRNGVTLFDEHSNEMGISKKAAVVGISTVILSRIAMAIPGMTLTPVLMNVLEKRGFLAKYPRSNAPIQTLFCGFVLIFATPLGCAFFKQRADIKVDSLESEVRDSIRKKRPELETVWFNKGL</sequence>